<evidence type="ECO:0000255" key="1">
    <source>
        <dbReference type="HAMAP-Rule" id="MF_00440"/>
    </source>
</evidence>
<feature type="chain" id="PRO_1000191764" description="Transcriptional repressor NrdR">
    <location>
        <begin position="1"/>
        <end position="163"/>
    </location>
</feature>
<feature type="domain" description="ATP-cone" evidence="1">
    <location>
        <begin position="49"/>
        <end position="139"/>
    </location>
</feature>
<feature type="zinc finger region" evidence="1">
    <location>
        <begin position="3"/>
        <end position="34"/>
    </location>
</feature>
<accession>B7J440</accession>
<organism>
    <name type="scientific">Acidithiobacillus ferrooxidans (strain ATCC 23270 / DSM 14882 / CIP 104768 / NCIMB 8455)</name>
    <name type="common">Ferrobacillus ferrooxidans (strain ATCC 23270)</name>
    <dbReference type="NCBI Taxonomy" id="243159"/>
    <lineage>
        <taxon>Bacteria</taxon>
        <taxon>Pseudomonadati</taxon>
        <taxon>Pseudomonadota</taxon>
        <taxon>Acidithiobacillia</taxon>
        <taxon>Acidithiobacillales</taxon>
        <taxon>Acidithiobacillaceae</taxon>
        <taxon>Acidithiobacillus</taxon>
    </lineage>
</organism>
<comment type="function">
    <text evidence="1">Negatively regulates transcription of bacterial ribonucleotide reductase nrd genes and operons by binding to NrdR-boxes.</text>
</comment>
<comment type="cofactor">
    <cofactor evidence="1">
        <name>Zn(2+)</name>
        <dbReference type="ChEBI" id="CHEBI:29105"/>
    </cofactor>
    <text evidence="1">Binds 1 zinc ion.</text>
</comment>
<comment type="similarity">
    <text evidence="1">Belongs to the NrdR family.</text>
</comment>
<keyword id="KW-0067">ATP-binding</keyword>
<keyword id="KW-0238">DNA-binding</keyword>
<keyword id="KW-0479">Metal-binding</keyword>
<keyword id="KW-0547">Nucleotide-binding</keyword>
<keyword id="KW-1185">Reference proteome</keyword>
<keyword id="KW-0678">Repressor</keyword>
<keyword id="KW-0804">Transcription</keyword>
<keyword id="KW-0805">Transcription regulation</keyword>
<keyword id="KW-0862">Zinc</keyword>
<keyword id="KW-0863">Zinc-finger</keyword>
<protein>
    <recommendedName>
        <fullName evidence="1">Transcriptional repressor NrdR</fullName>
    </recommendedName>
</protein>
<dbReference type="EMBL" id="CP001219">
    <property type="protein sequence ID" value="ACK80828.1"/>
    <property type="molecule type" value="Genomic_DNA"/>
</dbReference>
<dbReference type="RefSeq" id="WP_012536071.1">
    <property type="nucleotide sequence ID" value="NC_011761.1"/>
</dbReference>
<dbReference type="SMR" id="B7J440"/>
<dbReference type="STRING" id="243159.AFE_0296"/>
<dbReference type="PaxDb" id="243159-AFE_0296"/>
<dbReference type="GeneID" id="65279677"/>
<dbReference type="KEGG" id="afr:AFE_0296"/>
<dbReference type="eggNOG" id="COG1327">
    <property type="taxonomic scope" value="Bacteria"/>
</dbReference>
<dbReference type="HOGENOM" id="CLU_108412_0_0_6"/>
<dbReference type="Proteomes" id="UP000001362">
    <property type="component" value="Chromosome"/>
</dbReference>
<dbReference type="GO" id="GO:0005524">
    <property type="term" value="F:ATP binding"/>
    <property type="evidence" value="ECO:0007669"/>
    <property type="project" value="UniProtKB-KW"/>
</dbReference>
<dbReference type="GO" id="GO:0003677">
    <property type="term" value="F:DNA binding"/>
    <property type="evidence" value="ECO:0007669"/>
    <property type="project" value="UniProtKB-KW"/>
</dbReference>
<dbReference type="GO" id="GO:0008270">
    <property type="term" value="F:zinc ion binding"/>
    <property type="evidence" value="ECO:0007669"/>
    <property type="project" value="UniProtKB-UniRule"/>
</dbReference>
<dbReference type="GO" id="GO:0045892">
    <property type="term" value="P:negative regulation of DNA-templated transcription"/>
    <property type="evidence" value="ECO:0007669"/>
    <property type="project" value="UniProtKB-UniRule"/>
</dbReference>
<dbReference type="HAMAP" id="MF_00440">
    <property type="entry name" value="NrdR"/>
    <property type="match status" value="1"/>
</dbReference>
<dbReference type="InterPro" id="IPR005144">
    <property type="entry name" value="ATP-cone_dom"/>
</dbReference>
<dbReference type="InterPro" id="IPR055173">
    <property type="entry name" value="NrdR-like_N"/>
</dbReference>
<dbReference type="InterPro" id="IPR003796">
    <property type="entry name" value="RNR_NrdR-like"/>
</dbReference>
<dbReference type="NCBIfam" id="TIGR00244">
    <property type="entry name" value="transcriptional regulator NrdR"/>
    <property type="match status" value="1"/>
</dbReference>
<dbReference type="PANTHER" id="PTHR30455">
    <property type="entry name" value="TRANSCRIPTIONAL REPRESSOR NRDR"/>
    <property type="match status" value="1"/>
</dbReference>
<dbReference type="PANTHER" id="PTHR30455:SF2">
    <property type="entry name" value="TRANSCRIPTIONAL REPRESSOR NRDR"/>
    <property type="match status" value="1"/>
</dbReference>
<dbReference type="Pfam" id="PF03477">
    <property type="entry name" value="ATP-cone"/>
    <property type="match status" value="1"/>
</dbReference>
<dbReference type="Pfam" id="PF22811">
    <property type="entry name" value="Zn_ribbon_NrdR"/>
    <property type="match status" value="1"/>
</dbReference>
<dbReference type="PROSITE" id="PS51161">
    <property type="entry name" value="ATP_CONE"/>
    <property type="match status" value="1"/>
</dbReference>
<name>NRDR_ACIF2</name>
<sequence>MHCPFCAYADTRVVDSRLADDGGSVRRRRECPQCGQRFTTFERAELALPVVVKTDGRRESFNEEKLQRGLTRALSKRPVATARVDAAVRMIQRRIRERGEREIPARLIGELVMEALRDLDPVAYVRFASVYRRFEDVDAFSVEIARMKEAEVPDGGDDLNRGD</sequence>
<reference key="1">
    <citation type="journal article" date="2008" name="BMC Genomics">
        <title>Acidithiobacillus ferrooxidans metabolism: from genome sequence to industrial applications.</title>
        <authorList>
            <person name="Valdes J."/>
            <person name="Pedroso I."/>
            <person name="Quatrini R."/>
            <person name="Dodson R.J."/>
            <person name="Tettelin H."/>
            <person name="Blake R. II"/>
            <person name="Eisen J.A."/>
            <person name="Holmes D.S."/>
        </authorList>
    </citation>
    <scope>NUCLEOTIDE SEQUENCE [LARGE SCALE GENOMIC DNA]</scope>
    <source>
        <strain>ATCC 23270 / DSM 14882 / CIP 104768 / NCIMB 8455</strain>
    </source>
</reference>
<gene>
    <name evidence="1" type="primary">nrdR</name>
    <name type="ordered locus">AFE_0296</name>
</gene>
<proteinExistence type="inferred from homology"/>